<organism>
    <name type="scientific">Candida maltosa</name>
    <name type="common">Yeast</name>
    <dbReference type="NCBI Taxonomy" id="5479"/>
    <lineage>
        <taxon>Eukaryota</taxon>
        <taxon>Fungi</taxon>
        <taxon>Dikarya</taxon>
        <taxon>Ascomycota</taxon>
        <taxon>Saccharomycotina</taxon>
        <taxon>Pichiomycetes</taxon>
        <taxon>Debaryomycetaceae</taxon>
        <taxon>Candida/Lodderomyces clade</taxon>
        <taxon>Candida</taxon>
    </lineage>
</organism>
<accession>P32071</accession>
<proteinExistence type="inferred from homology"/>
<protein>
    <recommendedName>
        <fullName>Cycloheximide resistance protein</fullName>
    </recommendedName>
</protein>
<keyword id="KW-0046">Antibiotic resistance</keyword>
<keyword id="KW-0196">Cycloheximide resistance</keyword>
<keyword id="KW-0472">Membrane</keyword>
<keyword id="KW-0812">Transmembrane</keyword>
<keyword id="KW-1133">Transmembrane helix</keyword>
<keyword id="KW-0813">Transport</keyword>
<feature type="chain" id="PRO_0000173434" description="Cycloheximide resistance protein">
    <location>
        <begin position="1"/>
        <end position="552"/>
    </location>
</feature>
<feature type="transmembrane region" description="Helical" evidence="1">
    <location>
        <begin position="100"/>
        <end position="120"/>
    </location>
</feature>
<feature type="transmembrane region" description="Helical" evidence="1">
    <location>
        <begin position="137"/>
        <end position="157"/>
    </location>
</feature>
<feature type="transmembrane region" description="Helical" evidence="1">
    <location>
        <begin position="168"/>
        <end position="188"/>
    </location>
</feature>
<feature type="transmembrane region" description="Helical" evidence="1">
    <location>
        <begin position="194"/>
        <end position="213"/>
    </location>
</feature>
<feature type="transmembrane region" description="Helical" evidence="1">
    <location>
        <begin position="225"/>
        <end position="246"/>
    </location>
</feature>
<feature type="transmembrane region" description="Helical" evidence="1">
    <location>
        <begin position="262"/>
        <end position="282"/>
    </location>
</feature>
<feature type="transmembrane region" description="Helical" evidence="1">
    <location>
        <begin position="346"/>
        <end position="362"/>
    </location>
</feature>
<feature type="transmembrane region" description="Helical" evidence="1">
    <location>
        <begin position="381"/>
        <end position="399"/>
    </location>
</feature>
<feature type="transmembrane region" description="Helical" evidence="1">
    <location>
        <begin position="419"/>
        <end position="439"/>
    </location>
</feature>
<feature type="transmembrane region" description="Helical" evidence="1">
    <location>
        <begin position="445"/>
        <end position="464"/>
    </location>
</feature>
<feature type="transmembrane region" description="Helical" evidence="1">
    <location>
        <begin position="477"/>
        <end position="494"/>
    </location>
</feature>
<feature type="transmembrane region" description="Helical" evidence="1">
    <location>
        <begin position="518"/>
        <end position="539"/>
    </location>
</feature>
<feature type="region of interest" description="Disordered" evidence="2">
    <location>
        <begin position="46"/>
        <end position="70"/>
    </location>
</feature>
<feature type="compositionally biased region" description="Polar residues" evidence="2">
    <location>
        <begin position="47"/>
        <end position="56"/>
    </location>
</feature>
<gene>
    <name type="primary">CYHR</name>
</gene>
<name>CYHR_CANMA</name>
<comment type="function">
    <text>Probable transporter. Confers resistance to cycloheximide.</text>
</comment>
<comment type="subcellular location">
    <subcellularLocation>
        <location>Membrane</location>
        <topology>Multi-pass membrane protein</topology>
    </subcellularLocation>
</comment>
<comment type="similarity">
    <text evidence="3">Belongs to the major facilitator superfamily. CAR1 family.</text>
</comment>
<dbReference type="EMBL" id="M64932">
    <property type="protein sequence ID" value="AAA34335.1"/>
    <property type="molecule type" value="Genomic_DNA"/>
</dbReference>
<dbReference type="PIR" id="JC1173">
    <property type="entry name" value="JC1173"/>
</dbReference>
<dbReference type="TCDB" id="2.A.1.2.2">
    <property type="family name" value="the major facilitator superfamily (mfs)"/>
</dbReference>
<dbReference type="GO" id="GO:0005886">
    <property type="term" value="C:plasma membrane"/>
    <property type="evidence" value="ECO:0007669"/>
    <property type="project" value="UniProtKB-ARBA"/>
</dbReference>
<dbReference type="GO" id="GO:0015244">
    <property type="term" value="F:fluconazole transmembrane transporter activity"/>
    <property type="evidence" value="ECO:0007669"/>
    <property type="project" value="TreeGrafter"/>
</dbReference>
<dbReference type="GO" id="GO:0042910">
    <property type="term" value="F:xenobiotic transmembrane transporter activity"/>
    <property type="evidence" value="ECO:0007669"/>
    <property type="project" value="InterPro"/>
</dbReference>
<dbReference type="GO" id="GO:0046677">
    <property type="term" value="P:response to antibiotic"/>
    <property type="evidence" value="ECO:0007669"/>
    <property type="project" value="UniProtKB-KW"/>
</dbReference>
<dbReference type="GO" id="GO:0046898">
    <property type="term" value="P:response to cycloheximide"/>
    <property type="evidence" value="ECO:0007669"/>
    <property type="project" value="UniProtKB-KW"/>
</dbReference>
<dbReference type="GO" id="GO:1990961">
    <property type="term" value="P:xenobiotic detoxification by transmembrane export across the plasma membrane"/>
    <property type="evidence" value="ECO:0007669"/>
    <property type="project" value="TreeGrafter"/>
</dbReference>
<dbReference type="CDD" id="cd17323">
    <property type="entry name" value="MFS_Tpo1_MDR_like"/>
    <property type="match status" value="1"/>
</dbReference>
<dbReference type="FunFam" id="1.20.1250.20:FF:000011">
    <property type="entry name" value="MFS multidrug transporter, putative"/>
    <property type="match status" value="1"/>
</dbReference>
<dbReference type="Gene3D" id="1.20.1250.20">
    <property type="entry name" value="MFS general substrate transporter like domains"/>
    <property type="match status" value="1"/>
</dbReference>
<dbReference type="InterPro" id="IPR011701">
    <property type="entry name" value="MFS"/>
</dbReference>
<dbReference type="InterPro" id="IPR020846">
    <property type="entry name" value="MFS_dom"/>
</dbReference>
<dbReference type="InterPro" id="IPR036259">
    <property type="entry name" value="MFS_trans_sf"/>
</dbReference>
<dbReference type="InterPro" id="IPR004734">
    <property type="entry name" value="Multidrug-R"/>
</dbReference>
<dbReference type="NCBIfam" id="TIGR00880">
    <property type="entry name" value="2_A_01_02"/>
    <property type="match status" value="1"/>
</dbReference>
<dbReference type="PANTHER" id="PTHR23502:SF23">
    <property type="entry name" value="FLUCONAZOLE RESISTANCE PROTEIN 1"/>
    <property type="match status" value="1"/>
</dbReference>
<dbReference type="PANTHER" id="PTHR23502">
    <property type="entry name" value="MAJOR FACILITATOR SUPERFAMILY"/>
    <property type="match status" value="1"/>
</dbReference>
<dbReference type="Pfam" id="PF07690">
    <property type="entry name" value="MFS_1"/>
    <property type="match status" value="1"/>
</dbReference>
<dbReference type="PRINTS" id="PR00173">
    <property type="entry name" value="EDTRNSPORT"/>
</dbReference>
<dbReference type="SUPFAM" id="SSF103473">
    <property type="entry name" value="MFS general substrate transporter"/>
    <property type="match status" value="1"/>
</dbReference>
<dbReference type="PROSITE" id="PS50850">
    <property type="entry name" value="MFS"/>
    <property type="match status" value="1"/>
</dbReference>
<sequence length="552" mass="61366">MAAFIKDSFWGQIIYRLSGRKLFRHNDELPDYVVPEKYLLDPKEEVLNSSDKSQSSENKEQTEGDQATIQNEPASEHIIVTWDGDDDPENPYNWPFAWKAIAAMQIGFLTVSVYMASAIYTPGVEEIMNQFNINSTLATLPLTMFVIGYGIGPLFWSPLSENSRIGRTPLYIITLFIFFILQIPTALSNHIAGLSVLRVIAGFFAAPALSTGGASYGDFIAMHYYSIALGVWSIFAVAGPSIGPLIGAAVINRSHDADGWRWSFWFMAILSGVCFIVLSFSLPETYGKTLLRRKAERLRKLTGNNRIISEGELEDGHKTTSQVVSSLLWRPLEITMLEPVVFLIDIYIALVYSIMYLIFESVPIVYAGIHHFTLVEMGATYVSTIIGIIIGGAIYLPTVYYKFTKKLLAGQNVTPEVFLPPAIFGAICMPIGVFIFGWTSSPDINWFVPLIGMALFAVGAFIIFQTLFNYMAVSFKVEYLASVFSSNAFFRSVSAGAFPLFGRALYNNLSIDKFPVGWGSSILGFISLGMIAIPVFFYLNGPKLRARSKYAY</sequence>
<evidence type="ECO:0000255" key="1"/>
<evidence type="ECO:0000256" key="2">
    <source>
        <dbReference type="SAM" id="MobiDB-lite"/>
    </source>
</evidence>
<evidence type="ECO:0000305" key="3"/>
<reference key="1">
    <citation type="journal article" date="1992" name="Gene">
        <title>Cloning and sequence analysis of a Candida maltosa gene which confers resistance to cycloheximide.</title>
        <authorList>
            <person name="Sasnauskas K."/>
            <person name="Jomantiene R."/>
            <person name="Lebediene E."/>
            <person name="Lebedys J."/>
            <person name="Januska A."/>
            <person name="Janulaitis A."/>
        </authorList>
    </citation>
    <scope>NUCLEOTIDE SEQUENCE [GENOMIC DNA]</scope>
    <source>
        <strain>VSB-889</strain>
    </source>
</reference>